<organism>
    <name type="scientific">Staphylococcus aureus (strain N315)</name>
    <dbReference type="NCBI Taxonomy" id="158879"/>
    <lineage>
        <taxon>Bacteria</taxon>
        <taxon>Bacillati</taxon>
        <taxon>Bacillota</taxon>
        <taxon>Bacilli</taxon>
        <taxon>Bacillales</taxon>
        <taxon>Staphylococcaceae</taxon>
        <taxon>Staphylococcus</taxon>
    </lineage>
</organism>
<accession>Q7A5P3</accession>
<name>CSPA_STAAN</name>
<protein>
    <recommendedName>
        <fullName>Cold shock protein CspA</fullName>
    </recommendedName>
</protein>
<feature type="chain" id="PRO_0000262543" description="Cold shock protein CspA">
    <location>
        <begin position="1"/>
        <end position="66"/>
    </location>
</feature>
<feature type="domain" description="CSD">
    <location>
        <begin position="1"/>
        <end position="66"/>
    </location>
</feature>
<sequence>MKQGTVKWFNAEKGFGFIEVEGENDVFVHFSAINQDGYKSLEEGQAVEFEVVEGDRGPQAANVVKL</sequence>
<keyword id="KW-0963">Cytoplasm</keyword>
<gene>
    <name type="primary">cspA</name>
    <name type="ordered locus">SA1234</name>
</gene>
<reference key="1">
    <citation type="journal article" date="2001" name="Lancet">
        <title>Whole genome sequencing of meticillin-resistant Staphylococcus aureus.</title>
        <authorList>
            <person name="Kuroda M."/>
            <person name="Ohta T."/>
            <person name="Uchiyama I."/>
            <person name="Baba T."/>
            <person name="Yuzawa H."/>
            <person name="Kobayashi I."/>
            <person name="Cui L."/>
            <person name="Oguchi A."/>
            <person name="Aoki K."/>
            <person name="Nagai Y."/>
            <person name="Lian J.-Q."/>
            <person name="Ito T."/>
            <person name="Kanamori M."/>
            <person name="Matsumaru H."/>
            <person name="Maruyama A."/>
            <person name="Murakami H."/>
            <person name="Hosoyama A."/>
            <person name="Mizutani-Ui Y."/>
            <person name="Takahashi N.K."/>
            <person name="Sawano T."/>
            <person name="Inoue R."/>
            <person name="Kaito C."/>
            <person name="Sekimizu K."/>
            <person name="Hirakawa H."/>
            <person name="Kuhara S."/>
            <person name="Goto S."/>
            <person name="Yabuzaki J."/>
            <person name="Kanehisa M."/>
            <person name="Yamashita A."/>
            <person name="Oshima K."/>
            <person name="Furuya K."/>
            <person name="Yoshino C."/>
            <person name="Shiba T."/>
            <person name="Hattori M."/>
            <person name="Ogasawara N."/>
            <person name="Hayashi H."/>
            <person name="Hiramatsu K."/>
        </authorList>
    </citation>
    <scope>NUCLEOTIDE SEQUENCE [LARGE SCALE GENOMIC DNA]</scope>
    <source>
        <strain>N315</strain>
    </source>
</reference>
<dbReference type="EMBL" id="BA000018">
    <property type="protein sequence ID" value="BAB42494.1"/>
    <property type="molecule type" value="Genomic_DNA"/>
</dbReference>
<dbReference type="RefSeq" id="WP_000809131.1">
    <property type="nucleotide sequence ID" value="NC_002745.2"/>
</dbReference>
<dbReference type="SMR" id="Q7A5P3"/>
<dbReference type="EnsemblBacteria" id="BAB42494">
    <property type="protein sequence ID" value="BAB42494"/>
    <property type="gene ID" value="BAB42494"/>
</dbReference>
<dbReference type="GeneID" id="98345769"/>
<dbReference type="KEGG" id="sau:SA1234"/>
<dbReference type="HOGENOM" id="CLU_117621_6_1_9"/>
<dbReference type="GO" id="GO:0005737">
    <property type="term" value="C:cytoplasm"/>
    <property type="evidence" value="ECO:0007669"/>
    <property type="project" value="UniProtKB-SubCell"/>
</dbReference>
<dbReference type="GO" id="GO:0003676">
    <property type="term" value="F:nucleic acid binding"/>
    <property type="evidence" value="ECO:0007669"/>
    <property type="project" value="InterPro"/>
</dbReference>
<dbReference type="CDD" id="cd04458">
    <property type="entry name" value="CSP_CDS"/>
    <property type="match status" value="1"/>
</dbReference>
<dbReference type="FunFam" id="2.40.50.140:FF:000006">
    <property type="entry name" value="Cold shock protein CspC"/>
    <property type="match status" value="1"/>
</dbReference>
<dbReference type="Gene3D" id="6.20.370.130">
    <property type="match status" value="1"/>
</dbReference>
<dbReference type="Gene3D" id="2.40.50.140">
    <property type="entry name" value="Nucleic acid-binding proteins"/>
    <property type="match status" value="1"/>
</dbReference>
<dbReference type="InterPro" id="IPR012156">
    <property type="entry name" value="Cold_shock_CspA"/>
</dbReference>
<dbReference type="InterPro" id="IPR050181">
    <property type="entry name" value="Cold_shock_domain"/>
</dbReference>
<dbReference type="InterPro" id="IPR011129">
    <property type="entry name" value="CSD"/>
</dbReference>
<dbReference type="InterPro" id="IPR019844">
    <property type="entry name" value="CSD_CS"/>
</dbReference>
<dbReference type="InterPro" id="IPR002059">
    <property type="entry name" value="CSP_DNA-bd"/>
</dbReference>
<dbReference type="InterPro" id="IPR012340">
    <property type="entry name" value="NA-bd_OB-fold"/>
</dbReference>
<dbReference type="PANTHER" id="PTHR11544">
    <property type="entry name" value="COLD SHOCK DOMAIN CONTAINING PROTEINS"/>
    <property type="match status" value="1"/>
</dbReference>
<dbReference type="Pfam" id="PF00313">
    <property type="entry name" value="CSD"/>
    <property type="match status" value="1"/>
</dbReference>
<dbReference type="PIRSF" id="PIRSF002599">
    <property type="entry name" value="Cold_shock_A"/>
    <property type="match status" value="1"/>
</dbReference>
<dbReference type="PRINTS" id="PR00050">
    <property type="entry name" value="COLDSHOCK"/>
</dbReference>
<dbReference type="SMART" id="SM00357">
    <property type="entry name" value="CSP"/>
    <property type="match status" value="1"/>
</dbReference>
<dbReference type="SUPFAM" id="SSF50249">
    <property type="entry name" value="Nucleic acid-binding proteins"/>
    <property type="match status" value="1"/>
</dbReference>
<dbReference type="PROSITE" id="PS00352">
    <property type="entry name" value="CSD_1"/>
    <property type="match status" value="1"/>
</dbReference>
<dbReference type="PROSITE" id="PS51857">
    <property type="entry name" value="CSD_2"/>
    <property type="match status" value="1"/>
</dbReference>
<comment type="function">
    <text evidence="1">Involved in cold stress response.</text>
</comment>
<comment type="subcellular location">
    <subcellularLocation>
        <location evidence="1">Cytoplasm</location>
    </subcellularLocation>
</comment>
<evidence type="ECO:0000250" key="1"/>
<proteinExistence type="inferred from homology"/>